<gene>
    <name type="primary">Ttc39a</name>
    <name type="synonym">Kiaa0452</name>
</gene>
<sequence length="578" mass="66126">MGQKGHKDSLYDCKGSPVSSLHEALDQCMTALDLFLTNQFSEALSYLKPRTKESMYHSLTYATILEMQAMMTFDPQDILLAGNMMKEAQSLCQRHRRKSSMTDSFSNLVHRPTIDQFTEEEIHAEVCYAECLLQRAALTFLQDENMVSFIKGGIKVRNSYQTYKELDSLVQSSQYSKGESHRHFEGGVKLGVGAFNLTLSMLPTRILRLLEFVGFSGNKDYGLLQLEEGATGHSFRAVLCVMLLLCYHTFLTFVLGTGNVNIEEAEKLLKPYLNRYPKGAIFLFFAGRIEAIKGNIDAAVRRFEECCEAQQHWKQFHHMCYWELMWCFTYKGQWKMAYFYADLLSKENSWSKATYIYMKAAYLSMFGKEDYKPFGDNEVELFRAVPGLKLKIAGKSLPTEKFAIRKSRRYLSPNPISLPIPALEMMYIWNGYAVIGKQPTLTDGMLEVITKAEEMLAMGPENEYSADDDCLVKLLKGLCLKYLGRIQEAEENFRSISANEKKIKYDHYLIPNALLELALLFMEQGRNEEAIKLLESAKQNYKNYSMESRTHFRIQAATLQARSSLEDGNRSLVSSVSL</sequence>
<accession>A2ACP1</accession>
<accession>A2ACN9</accession>
<accession>A2ACP2</accession>
<accession>A2ACP3</accession>
<accession>A2ACP4</accession>
<accession>Q6A067</accession>
<accession>Q8C612</accession>
<accession>Q8CFL5</accession>
<accession>Q8K1A9</accession>
<organism>
    <name type="scientific">Mus musculus</name>
    <name type="common">Mouse</name>
    <dbReference type="NCBI Taxonomy" id="10090"/>
    <lineage>
        <taxon>Eukaryota</taxon>
        <taxon>Metazoa</taxon>
        <taxon>Chordata</taxon>
        <taxon>Craniata</taxon>
        <taxon>Vertebrata</taxon>
        <taxon>Euteleostomi</taxon>
        <taxon>Mammalia</taxon>
        <taxon>Eutheria</taxon>
        <taxon>Euarchontoglires</taxon>
        <taxon>Glires</taxon>
        <taxon>Rodentia</taxon>
        <taxon>Myomorpha</taxon>
        <taxon>Muroidea</taxon>
        <taxon>Muridae</taxon>
        <taxon>Murinae</taxon>
        <taxon>Mus</taxon>
        <taxon>Mus</taxon>
    </lineage>
</organism>
<proteinExistence type="evidence at transcript level"/>
<reference key="1">
    <citation type="journal article" date="2005" name="Science">
        <title>The transcriptional landscape of the mammalian genome.</title>
        <authorList>
            <person name="Carninci P."/>
            <person name="Kasukawa T."/>
            <person name="Katayama S."/>
            <person name="Gough J."/>
            <person name="Frith M.C."/>
            <person name="Maeda N."/>
            <person name="Oyama R."/>
            <person name="Ravasi T."/>
            <person name="Lenhard B."/>
            <person name="Wells C."/>
            <person name="Kodzius R."/>
            <person name="Shimokawa K."/>
            <person name="Bajic V.B."/>
            <person name="Brenner S.E."/>
            <person name="Batalov S."/>
            <person name="Forrest A.R."/>
            <person name="Zavolan M."/>
            <person name="Davis M.J."/>
            <person name="Wilming L.G."/>
            <person name="Aidinis V."/>
            <person name="Allen J.E."/>
            <person name="Ambesi-Impiombato A."/>
            <person name="Apweiler R."/>
            <person name="Aturaliya R.N."/>
            <person name="Bailey T.L."/>
            <person name="Bansal M."/>
            <person name="Baxter L."/>
            <person name="Beisel K.W."/>
            <person name="Bersano T."/>
            <person name="Bono H."/>
            <person name="Chalk A.M."/>
            <person name="Chiu K.P."/>
            <person name="Choudhary V."/>
            <person name="Christoffels A."/>
            <person name="Clutterbuck D.R."/>
            <person name="Crowe M.L."/>
            <person name="Dalla E."/>
            <person name="Dalrymple B.P."/>
            <person name="de Bono B."/>
            <person name="Della Gatta G."/>
            <person name="di Bernardo D."/>
            <person name="Down T."/>
            <person name="Engstrom P."/>
            <person name="Fagiolini M."/>
            <person name="Faulkner G."/>
            <person name="Fletcher C.F."/>
            <person name="Fukushima T."/>
            <person name="Furuno M."/>
            <person name="Futaki S."/>
            <person name="Gariboldi M."/>
            <person name="Georgii-Hemming P."/>
            <person name="Gingeras T.R."/>
            <person name="Gojobori T."/>
            <person name="Green R.E."/>
            <person name="Gustincich S."/>
            <person name="Harbers M."/>
            <person name="Hayashi Y."/>
            <person name="Hensch T.K."/>
            <person name="Hirokawa N."/>
            <person name="Hill D."/>
            <person name="Huminiecki L."/>
            <person name="Iacono M."/>
            <person name="Ikeo K."/>
            <person name="Iwama A."/>
            <person name="Ishikawa T."/>
            <person name="Jakt M."/>
            <person name="Kanapin A."/>
            <person name="Katoh M."/>
            <person name="Kawasawa Y."/>
            <person name="Kelso J."/>
            <person name="Kitamura H."/>
            <person name="Kitano H."/>
            <person name="Kollias G."/>
            <person name="Krishnan S.P."/>
            <person name="Kruger A."/>
            <person name="Kummerfeld S.K."/>
            <person name="Kurochkin I.V."/>
            <person name="Lareau L.F."/>
            <person name="Lazarevic D."/>
            <person name="Lipovich L."/>
            <person name="Liu J."/>
            <person name="Liuni S."/>
            <person name="McWilliam S."/>
            <person name="Madan Babu M."/>
            <person name="Madera M."/>
            <person name="Marchionni L."/>
            <person name="Matsuda H."/>
            <person name="Matsuzawa S."/>
            <person name="Miki H."/>
            <person name="Mignone F."/>
            <person name="Miyake S."/>
            <person name="Morris K."/>
            <person name="Mottagui-Tabar S."/>
            <person name="Mulder N."/>
            <person name="Nakano N."/>
            <person name="Nakauchi H."/>
            <person name="Ng P."/>
            <person name="Nilsson R."/>
            <person name="Nishiguchi S."/>
            <person name="Nishikawa S."/>
            <person name="Nori F."/>
            <person name="Ohara O."/>
            <person name="Okazaki Y."/>
            <person name="Orlando V."/>
            <person name="Pang K.C."/>
            <person name="Pavan W.J."/>
            <person name="Pavesi G."/>
            <person name="Pesole G."/>
            <person name="Petrovsky N."/>
            <person name="Piazza S."/>
            <person name="Reed J."/>
            <person name="Reid J.F."/>
            <person name="Ring B.Z."/>
            <person name="Ringwald M."/>
            <person name="Rost B."/>
            <person name="Ruan Y."/>
            <person name="Salzberg S.L."/>
            <person name="Sandelin A."/>
            <person name="Schneider C."/>
            <person name="Schoenbach C."/>
            <person name="Sekiguchi K."/>
            <person name="Semple C.A."/>
            <person name="Seno S."/>
            <person name="Sessa L."/>
            <person name="Sheng Y."/>
            <person name="Shibata Y."/>
            <person name="Shimada H."/>
            <person name="Shimada K."/>
            <person name="Silva D."/>
            <person name="Sinclair B."/>
            <person name="Sperling S."/>
            <person name="Stupka E."/>
            <person name="Sugiura K."/>
            <person name="Sultana R."/>
            <person name="Takenaka Y."/>
            <person name="Taki K."/>
            <person name="Tammoja K."/>
            <person name="Tan S.L."/>
            <person name="Tang S."/>
            <person name="Taylor M.S."/>
            <person name="Tegner J."/>
            <person name="Teichmann S.A."/>
            <person name="Ueda H.R."/>
            <person name="van Nimwegen E."/>
            <person name="Verardo R."/>
            <person name="Wei C.L."/>
            <person name="Yagi K."/>
            <person name="Yamanishi H."/>
            <person name="Zabarovsky E."/>
            <person name="Zhu S."/>
            <person name="Zimmer A."/>
            <person name="Hide W."/>
            <person name="Bult C."/>
            <person name="Grimmond S.M."/>
            <person name="Teasdale R.D."/>
            <person name="Liu E.T."/>
            <person name="Brusic V."/>
            <person name="Quackenbush J."/>
            <person name="Wahlestedt C."/>
            <person name="Mattick J.S."/>
            <person name="Hume D.A."/>
            <person name="Kai C."/>
            <person name="Sasaki D."/>
            <person name="Tomaru Y."/>
            <person name="Fukuda S."/>
            <person name="Kanamori-Katayama M."/>
            <person name="Suzuki M."/>
            <person name="Aoki J."/>
            <person name="Arakawa T."/>
            <person name="Iida J."/>
            <person name="Imamura K."/>
            <person name="Itoh M."/>
            <person name="Kato T."/>
            <person name="Kawaji H."/>
            <person name="Kawagashira N."/>
            <person name="Kawashima T."/>
            <person name="Kojima M."/>
            <person name="Kondo S."/>
            <person name="Konno H."/>
            <person name="Nakano K."/>
            <person name="Ninomiya N."/>
            <person name="Nishio T."/>
            <person name="Okada M."/>
            <person name="Plessy C."/>
            <person name="Shibata K."/>
            <person name="Shiraki T."/>
            <person name="Suzuki S."/>
            <person name="Tagami M."/>
            <person name="Waki K."/>
            <person name="Watahiki A."/>
            <person name="Okamura-Oho Y."/>
            <person name="Suzuki H."/>
            <person name="Kawai J."/>
            <person name="Hayashizaki Y."/>
        </authorList>
    </citation>
    <scope>NUCLEOTIDE SEQUENCE [LARGE SCALE MRNA] (ISOFORM 2)</scope>
    <source>
        <strain>C57BL/6J</strain>
        <tissue>Head</tissue>
        <tissue>Testis</tissue>
    </source>
</reference>
<reference key="2">
    <citation type="journal article" date="2009" name="PLoS Biol.">
        <title>Lineage-specific biology revealed by a finished genome assembly of the mouse.</title>
        <authorList>
            <person name="Church D.M."/>
            <person name="Goodstadt L."/>
            <person name="Hillier L.W."/>
            <person name="Zody M.C."/>
            <person name="Goldstein S."/>
            <person name="She X."/>
            <person name="Bult C.J."/>
            <person name="Agarwala R."/>
            <person name="Cherry J.L."/>
            <person name="DiCuccio M."/>
            <person name="Hlavina W."/>
            <person name="Kapustin Y."/>
            <person name="Meric P."/>
            <person name="Maglott D."/>
            <person name="Birtle Z."/>
            <person name="Marques A.C."/>
            <person name="Graves T."/>
            <person name="Zhou S."/>
            <person name="Teague B."/>
            <person name="Potamousis K."/>
            <person name="Churas C."/>
            <person name="Place M."/>
            <person name="Herschleb J."/>
            <person name="Runnheim R."/>
            <person name="Forrest D."/>
            <person name="Amos-Landgraf J."/>
            <person name="Schwartz D.C."/>
            <person name="Cheng Z."/>
            <person name="Lindblad-Toh K."/>
            <person name="Eichler E.E."/>
            <person name="Ponting C.P."/>
        </authorList>
    </citation>
    <scope>NUCLEOTIDE SEQUENCE [LARGE SCALE GENOMIC DNA]</scope>
    <source>
        <strain>C57BL/6J</strain>
    </source>
</reference>
<reference key="3">
    <citation type="journal article" date="2004" name="Genome Res.">
        <title>The status, quality, and expansion of the NIH full-length cDNA project: the Mammalian Gene Collection (MGC).</title>
        <authorList>
            <consortium name="The MGC Project Team"/>
        </authorList>
    </citation>
    <scope>NUCLEOTIDE SEQUENCE [LARGE SCALE MRNA] (ISOFORM 2)</scope>
    <source>
        <strain>FVB/N</strain>
        <tissue>Colon</tissue>
        <tissue>Mammary tumor</tissue>
    </source>
</reference>
<reference key="4">
    <citation type="journal article" date="2004" name="DNA Res.">
        <title>Prediction of the coding sequences of mouse homologues of KIAA gene: IV. The complete nucleotide sequences of 500 mouse KIAA-homologous cDNAs identified by screening of terminal sequences of cDNA clones randomly sampled from size-fractionated libraries.</title>
        <authorList>
            <person name="Okazaki N."/>
            <person name="Kikuno R."/>
            <person name="Ohara R."/>
            <person name="Inamoto S."/>
            <person name="Koseki H."/>
            <person name="Hiraoka S."/>
            <person name="Saga Y."/>
            <person name="Seino S."/>
            <person name="Nishimura M."/>
            <person name="Kaisho T."/>
            <person name="Hoshino K."/>
            <person name="Kitamura H."/>
            <person name="Nagase T."/>
            <person name="Ohara O."/>
            <person name="Koga H."/>
        </authorList>
    </citation>
    <scope>NUCLEOTIDE SEQUENCE [LARGE SCALE MRNA] OF 2-578 (ISOFORM 2)</scope>
    <source>
        <tissue>Pancreatic islet</tissue>
    </source>
</reference>
<evidence type="ECO:0000303" key="1">
    <source>
    </source>
</evidence>
<evidence type="ECO:0000303" key="2">
    <source>
    </source>
</evidence>
<evidence type="ECO:0000303" key="3">
    <source>
    </source>
</evidence>
<evidence type="ECO:0000305" key="4"/>
<keyword id="KW-0025">Alternative splicing</keyword>
<keyword id="KW-1185">Reference proteome</keyword>
<keyword id="KW-0677">Repeat</keyword>
<keyword id="KW-0802">TPR repeat</keyword>
<protein>
    <recommendedName>
        <fullName>Tetratricopeptide repeat protein 39A</fullName>
        <shortName>TPR repeat protein 39A</shortName>
    </recommendedName>
</protein>
<comment type="alternative products">
    <event type="alternative splicing"/>
    <isoform>
        <id>A2ACP1-1</id>
        <name>1</name>
        <sequence type="displayed"/>
    </isoform>
    <isoform>
        <id>A2ACP1-2</id>
        <name>2</name>
        <sequence type="described" ref="VSP_026354"/>
    </isoform>
</comment>
<comment type="similarity">
    <text evidence="4">Belongs to the TTC39 family.</text>
</comment>
<comment type="sequence caution" evidence="4">
    <conflict type="frameshift">
        <sequence resource="EMBL-CDS" id="BAC36475"/>
    </conflict>
</comment>
<comment type="sequence caution" evidence="4">
    <conflict type="erroneous gene model prediction">
        <sequence resource="EMBL-CDS" id="CAM13655"/>
    </conflict>
</comment>
<comment type="sequence caution" evidence="4">
    <conflict type="erroneous gene model prediction">
        <sequence resource="EMBL-CDS" id="CAM13658"/>
    </conflict>
</comment>
<comment type="sequence caution" evidence="4">
    <conflict type="erroneous gene model prediction">
        <sequence resource="EMBL-CDS" id="CAM13659"/>
    </conflict>
</comment>
<comment type="sequence caution" evidence="4">
    <conflict type="erroneous gene model prediction">
        <sequence resource="EMBL-CDS" id="CAM13660"/>
    </conflict>
</comment>
<name>TT39A_MOUSE</name>
<dbReference type="EMBL" id="AK048659">
    <property type="protein sequence ID" value="BAC33414.1"/>
    <property type="molecule type" value="mRNA"/>
</dbReference>
<dbReference type="EMBL" id="AK076772">
    <property type="protein sequence ID" value="BAC36475.1"/>
    <property type="status" value="ALT_FRAME"/>
    <property type="molecule type" value="mRNA"/>
</dbReference>
<dbReference type="EMBL" id="AL669905">
    <property type="protein sequence ID" value="CAM13655.1"/>
    <property type="status" value="ALT_SEQ"/>
    <property type="molecule type" value="Genomic_DNA"/>
</dbReference>
<dbReference type="EMBL" id="AL669905">
    <property type="protein sequence ID" value="CAM13656.1"/>
    <property type="molecule type" value="Genomic_DNA"/>
</dbReference>
<dbReference type="EMBL" id="AL669905">
    <property type="protein sequence ID" value="CAM13657.1"/>
    <property type="molecule type" value="Genomic_DNA"/>
</dbReference>
<dbReference type="EMBL" id="AL669905">
    <property type="protein sequence ID" value="CAM13658.1"/>
    <property type="status" value="ALT_SEQ"/>
    <property type="molecule type" value="Genomic_DNA"/>
</dbReference>
<dbReference type="EMBL" id="AL669905">
    <property type="protein sequence ID" value="CAM13659.1"/>
    <property type="status" value="ALT_SEQ"/>
    <property type="molecule type" value="Genomic_DNA"/>
</dbReference>
<dbReference type="EMBL" id="AL669905">
    <property type="protein sequence ID" value="CAM13660.1"/>
    <property type="status" value="ALT_SEQ"/>
    <property type="molecule type" value="Genomic_DNA"/>
</dbReference>
<dbReference type="EMBL" id="BC023883">
    <property type="protein sequence ID" value="AAH23883.1"/>
    <property type="molecule type" value="mRNA"/>
</dbReference>
<dbReference type="EMBL" id="BC026660">
    <property type="protein sequence ID" value="AAH26660.1"/>
    <property type="molecule type" value="mRNA"/>
</dbReference>
<dbReference type="EMBL" id="AK172951">
    <property type="protein sequence ID" value="BAD32229.1"/>
    <property type="molecule type" value="mRNA"/>
</dbReference>
<dbReference type="CCDS" id="CCDS18463.1">
    <molecule id="A2ACP1-2"/>
</dbReference>
<dbReference type="CCDS" id="CCDS51260.1">
    <molecule id="A2ACP1-1"/>
</dbReference>
<dbReference type="RefSeq" id="NP_001139420.1">
    <molecule id="A2ACP1-1"/>
    <property type="nucleotide sequence ID" value="NM_001145948.2"/>
</dbReference>
<dbReference type="RefSeq" id="NP_700441.2">
    <molecule id="A2ACP1-2"/>
    <property type="nucleotide sequence ID" value="NM_153392.3"/>
</dbReference>
<dbReference type="SMR" id="A2ACP1"/>
<dbReference type="FunCoup" id="A2ACP1">
    <property type="interactions" value="69"/>
</dbReference>
<dbReference type="STRING" id="10090.ENSMUSP00000102229"/>
<dbReference type="PhosphoSitePlus" id="A2ACP1"/>
<dbReference type="SwissPalm" id="A2ACP1"/>
<dbReference type="PaxDb" id="10090-ENSMUSP00000102229"/>
<dbReference type="PeptideAtlas" id="A2ACP1"/>
<dbReference type="ProteomicsDB" id="297733">
    <molecule id="A2ACP1-1"/>
</dbReference>
<dbReference type="ProteomicsDB" id="297734">
    <molecule id="A2ACP1-2"/>
</dbReference>
<dbReference type="Antibodypedia" id="32939">
    <property type="antibodies" value="32 antibodies from 15 providers"/>
</dbReference>
<dbReference type="DNASU" id="230603"/>
<dbReference type="Ensembl" id="ENSMUST00000064129.14">
    <molecule id="A2ACP1-2"/>
    <property type="protein sequence ID" value="ENSMUSP00000066334.8"/>
    <property type="gene ID" value="ENSMUSG00000028555.16"/>
</dbReference>
<dbReference type="Ensembl" id="ENSMUST00000106618.8">
    <molecule id="A2ACP1-1"/>
    <property type="protein sequence ID" value="ENSMUSP00000102229.2"/>
    <property type="gene ID" value="ENSMUSG00000028555.16"/>
</dbReference>
<dbReference type="GeneID" id="230603"/>
<dbReference type="KEGG" id="mmu:230603"/>
<dbReference type="UCSC" id="uc008ucj.2">
    <molecule id="A2ACP1-2"/>
    <property type="organism name" value="mouse"/>
</dbReference>
<dbReference type="UCSC" id="uc008uck.2">
    <molecule id="A2ACP1-1"/>
    <property type="organism name" value="mouse"/>
</dbReference>
<dbReference type="AGR" id="MGI:2444350"/>
<dbReference type="CTD" id="22996"/>
<dbReference type="MGI" id="MGI:2444350">
    <property type="gene designation" value="Ttc39a"/>
</dbReference>
<dbReference type="VEuPathDB" id="HostDB:ENSMUSG00000028555"/>
<dbReference type="eggNOG" id="KOG3783">
    <property type="taxonomic scope" value="Eukaryota"/>
</dbReference>
<dbReference type="GeneTree" id="ENSGT00950000182917"/>
<dbReference type="HOGENOM" id="CLU_010086_3_0_1"/>
<dbReference type="InParanoid" id="A2ACP1"/>
<dbReference type="OMA" id="GESHCHF"/>
<dbReference type="OrthoDB" id="43460at2759"/>
<dbReference type="PhylomeDB" id="A2ACP1"/>
<dbReference type="TreeFam" id="TF313761"/>
<dbReference type="BioGRID-ORCS" id="230603">
    <property type="hits" value="2 hits in 79 CRISPR screens"/>
</dbReference>
<dbReference type="ChiTaRS" id="Ttc39a">
    <property type="organism name" value="mouse"/>
</dbReference>
<dbReference type="PRO" id="PR:A2ACP1"/>
<dbReference type="Proteomes" id="UP000000589">
    <property type="component" value="Chromosome 4"/>
</dbReference>
<dbReference type="RNAct" id="A2ACP1">
    <property type="molecule type" value="protein"/>
</dbReference>
<dbReference type="Bgee" id="ENSMUSG00000028555">
    <property type="expression patterns" value="Expressed in spermatid and 124 other cell types or tissues"/>
</dbReference>
<dbReference type="ExpressionAtlas" id="A2ACP1">
    <property type="expression patterns" value="baseline and differential"/>
</dbReference>
<dbReference type="GO" id="GO:0005813">
    <property type="term" value="C:centrosome"/>
    <property type="evidence" value="ECO:0007669"/>
    <property type="project" value="Ensembl"/>
</dbReference>
<dbReference type="Gene3D" id="1.25.40.10">
    <property type="entry name" value="Tetratricopeptide repeat domain"/>
    <property type="match status" value="1"/>
</dbReference>
<dbReference type="InterPro" id="IPR019412">
    <property type="entry name" value="Iml2/TPR_39"/>
</dbReference>
<dbReference type="InterPro" id="IPR011990">
    <property type="entry name" value="TPR-like_helical_dom_sf"/>
</dbReference>
<dbReference type="InterPro" id="IPR019734">
    <property type="entry name" value="TPR_rpt"/>
</dbReference>
<dbReference type="PANTHER" id="PTHR31859">
    <property type="entry name" value="TETRATRICOPEPTIDE REPEAT PROTEIN 39 FAMILY MEMBER"/>
    <property type="match status" value="1"/>
</dbReference>
<dbReference type="PANTHER" id="PTHR31859:SF3">
    <property type="entry name" value="TETRATRICOPEPTIDE REPEAT PROTEIN 39A"/>
    <property type="match status" value="1"/>
</dbReference>
<dbReference type="Pfam" id="PF10300">
    <property type="entry name" value="Iml2-TPR_39"/>
    <property type="match status" value="1"/>
</dbReference>
<dbReference type="SMART" id="SM00028">
    <property type="entry name" value="TPR"/>
    <property type="match status" value="3"/>
</dbReference>
<dbReference type="SUPFAM" id="SSF81901">
    <property type="entry name" value="HCP-like"/>
    <property type="match status" value="1"/>
</dbReference>
<feature type="chain" id="PRO_0000291997" description="Tetratricopeptide repeat protein 39A">
    <location>
        <begin position="1"/>
        <end position="578"/>
    </location>
</feature>
<feature type="repeat" description="TPR 1">
    <location>
        <begin position="280"/>
        <end position="313"/>
    </location>
</feature>
<feature type="repeat" description="TPR 2">
    <location>
        <begin position="470"/>
        <end position="503"/>
    </location>
</feature>
<feature type="repeat" description="TPR 3">
    <location>
        <begin position="511"/>
        <end position="544"/>
    </location>
</feature>
<feature type="splice variant" id="VSP_026354" description="In isoform 2." evidence="1 2 3">
    <original>MGQKGHKDSLYDCK</original>
    <variation>MTTASGPGDLPA</variation>
    <location>
        <begin position="1"/>
        <end position="14"/>
    </location>
</feature>
<feature type="sequence conflict" description="In Ref. 3; AAH23883." evidence="4" ref="3">
    <original>F</original>
    <variation>L</variation>
    <location>
        <position position="552"/>
    </location>
</feature>